<comment type="function">
    <text evidence="1">One of the early assembly proteins it binds 23S rRNA. One of the proteins that surrounds the polypeptide exit tunnel on the outside of the ribosome. Forms the main docking site for trigger factor binding to the ribosome.</text>
</comment>
<comment type="subunit">
    <text evidence="1">Part of the 50S ribosomal subunit. Contacts protein L29, and trigger factor when it is bound to the ribosome.</text>
</comment>
<comment type="similarity">
    <text evidence="1">Belongs to the universal ribosomal protein uL23 family.</text>
</comment>
<sequence>MKNIYGVLKGPVLTEKAAILQEIDGQVVFKVHPKSNKIEIKRAIELMFDVKVKDVRTASMRGKEKRVGKTVGQTKEWKKAYVSLAEGEINFTDEI</sequence>
<keyword id="KW-1185">Reference proteome</keyword>
<keyword id="KW-0687">Ribonucleoprotein</keyword>
<keyword id="KW-0689">Ribosomal protein</keyword>
<keyword id="KW-0694">RNA-binding</keyword>
<keyword id="KW-0699">rRNA-binding</keyword>
<organism>
    <name type="scientific">Desulfotalea psychrophila (strain LSv54 / DSM 12343)</name>
    <dbReference type="NCBI Taxonomy" id="177439"/>
    <lineage>
        <taxon>Bacteria</taxon>
        <taxon>Pseudomonadati</taxon>
        <taxon>Thermodesulfobacteriota</taxon>
        <taxon>Desulfobulbia</taxon>
        <taxon>Desulfobulbales</taxon>
        <taxon>Desulfocapsaceae</taxon>
        <taxon>Desulfotalea</taxon>
    </lineage>
</organism>
<dbReference type="EMBL" id="CR522870">
    <property type="protein sequence ID" value="CAG35855.1"/>
    <property type="molecule type" value="Genomic_DNA"/>
</dbReference>
<dbReference type="RefSeq" id="WP_011188369.1">
    <property type="nucleotide sequence ID" value="NC_006138.1"/>
</dbReference>
<dbReference type="SMR" id="Q6AP69"/>
<dbReference type="STRING" id="177439.DP1126"/>
<dbReference type="KEGG" id="dps:DP1126"/>
<dbReference type="eggNOG" id="COG0089">
    <property type="taxonomic scope" value="Bacteria"/>
</dbReference>
<dbReference type="HOGENOM" id="CLU_037562_3_1_7"/>
<dbReference type="OrthoDB" id="9793353at2"/>
<dbReference type="Proteomes" id="UP000000602">
    <property type="component" value="Chromosome"/>
</dbReference>
<dbReference type="GO" id="GO:1990904">
    <property type="term" value="C:ribonucleoprotein complex"/>
    <property type="evidence" value="ECO:0007669"/>
    <property type="project" value="UniProtKB-KW"/>
</dbReference>
<dbReference type="GO" id="GO:0005840">
    <property type="term" value="C:ribosome"/>
    <property type="evidence" value="ECO:0007669"/>
    <property type="project" value="UniProtKB-KW"/>
</dbReference>
<dbReference type="GO" id="GO:0019843">
    <property type="term" value="F:rRNA binding"/>
    <property type="evidence" value="ECO:0007669"/>
    <property type="project" value="UniProtKB-UniRule"/>
</dbReference>
<dbReference type="GO" id="GO:0003735">
    <property type="term" value="F:structural constituent of ribosome"/>
    <property type="evidence" value="ECO:0007669"/>
    <property type="project" value="InterPro"/>
</dbReference>
<dbReference type="GO" id="GO:0006412">
    <property type="term" value="P:translation"/>
    <property type="evidence" value="ECO:0007669"/>
    <property type="project" value="UniProtKB-UniRule"/>
</dbReference>
<dbReference type="FunFam" id="3.30.70.330:FF:000001">
    <property type="entry name" value="50S ribosomal protein L23"/>
    <property type="match status" value="1"/>
</dbReference>
<dbReference type="Gene3D" id="3.30.70.330">
    <property type="match status" value="1"/>
</dbReference>
<dbReference type="HAMAP" id="MF_01369_B">
    <property type="entry name" value="Ribosomal_uL23_B"/>
    <property type="match status" value="1"/>
</dbReference>
<dbReference type="InterPro" id="IPR012677">
    <property type="entry name" value="Nucleotide-bd_a/b_plait_sf"/>
</dbReference>
<dbReference type="InterPro" id="IPR013025">
    <property type="entry name" value="Ribosomal_uL23-like"/>
</dbReference>
<dbReference type="InterPro" id="IPR012678">
    <property type="entry name" value="Ribosomal_uL23/eL15/eS24_sf"/>
</dbReference>
<dbReference type="NCBIfam" id="NF004359">
    <property type="entry name" value="PRK05738.1-3"/>
    <property type="match status" value="1"/>
</dbReference>
<dbReference type="NCBIfam" id="NF004363">
    <property type="entry name" value="PRK05738.2-4"/>
    <property type="match status" value="1"/>
</dbReference>
<dbReference type="NCBIfam" id="NF004366">
    <property type="entry name" value="PRK05738.3-2"/>
    <property type="match status" value="1"/>
</dbReference>
<dbReference type="PANTHER" id="PTHR11620">
    <property type="entry name" value="60S RIBOSOMAL PROTEIN L23A"/>
    <property type="match status" value="1"/>
</dbReference>
<dbReference type="Pfam" id="PF00276">
    <property type="entry name" value="Ribosomal_L23"/>
    <property type="match status" value="1"/>
</dbReference>
<dbReference type="SUPFAM" id="SSF54189">
    <property type="entry name" value="Ribosomal proteins S24e, L23 and L15e"/>
    <property type="match status" value="1"/>
</dbReference>
<reference key="1">
    <citation type="journal article" date="2004" name="Environ. Microbiol.">
        <title>The genome of Desulfotalea psychrophila, a sulfate-reducing bacterium from permanently cold Arctic sediments.</title>
        <authorList>
            <person name="Rabus R."/>
            <person name="Ruepp A."/>
            <person name="Frickey T."/>
            <person name="Rattei T."/>
            <person name="Fartmann B."/>
            <person name="Stark M."/>
            <person name="Bauer M."/>
            <person name="Zibat A."/>
            <person name="Lombardot T."/>
            <person name="Becker I."/>
            <person name="Amann J."/>
            <person name="Gellner K."/>
            <person name="Teeling H."/>
            <person name="Leuschner W.D."/>
            <person name="Gloeckner F.-O."/>
            <person name="Lupas A.N."/>
            <person name="Amann R."/>
            <person name="Klenk H.-P."/>
        </authorList>
    </citation>
    <scope>NUCLEOTIDE SEQUENCE [LARGE SCALE GENOMIC DNA]</scope>
    <source>
        <strain>DSM 12343 / LSv54</strain>
    </source>
</reference>
<protein>
    <recommendedName>
        <fullName evidence="1">Large ribosomal subunit protein uL23</fullName>
    </recommendedName>
    <alternativeName>
        <fullName evidence="2">50S ribosomal protein L23</fullName>
    </alternativeName>
</protein>
<feature type="chain" id="PRO_0000272740" description="Large ribosomal subunit protein uL23">
    <location>
        <begin position="1"/>
        <end position="95"/>
    </location>
</feature>
<accession>Q6AP69</accession>
<gene>
    <name evidence="1" type="primary">rplW</name>
    <name type="ordered locus">DP1126</name>
</gene>
<name>RL23_DESPS</name>
<evidence type="ECO:0000255" key="1">
    <source>
        <dbReference type="HAMAP-Rule" id="MF_01369"/>
    </source>
</evidence>
<evidence type="ECO:0000305" key="2"/>
<proteinExistence type="inferred from homology"/>